<evidence type="ECO:0000255" key="1">
    <source>
        <dbReference type="HAMAP-Rule" id="MF_00185"/>
    </source>
</evidence>
<sequence length="289" mass="33396">MFFEIALIGTTASGKTYIANTLAREFDAVVLSLDSLCVYKEINIASAKPSQDDLASIKYFGVNLLSVNEHFNVELFIREYQKAKEFALARNLPLIIVGGTGFYLKTMIDGLSEKTLESKSSLNNDEIYTLLLNIDPNYKIEKNDTYRLKKWLGIYEQTREIPSEFLKRTQKTGVLKDIEIYELSWDKEILKKRIQTRTKEMLDNGLLDEAKILFSKFDHKLKALNSIGLKECKEYLDGEISFKELENLITIHTTQLAKRQRTFNKKFQSKALEFDKALAILRMKFSIEK</sequence>
<name>MIAA_CAMJJ</name>
<dbReference type="EC" id="2.5.1.75" evidence="1"/>
<dbReference type="EMBL" id="CP000538">
    <property type="protein sequence ID" value="EAQ73203.1"/>
    <property type="molecule type" value="Genomic_DNA"/>
</dbReference>
<dbReference type="RefSeq" id="WP_002854240.1">
    <property type="nucleotide sequence ID" value="NC_008787.1"/>
</dbReference>
<dbReference type="SMR" id="A1VXP9"/>
<dbReference type="KEGG" id="cjj:CJJ81176_0201"/>
<dbReference type="eggNOG" id="COG0324">
    <property type="taxonomic scope" value="Bacteria"/>
</dbReference>
<dbReference type="HOGENOM" id="CLU_032616_0_1_7"/>
<dbReference type="Proteomes" id="UP000000646">
    <property type="component" value="Chromosome"/>
</dbReference>
<dbReference type="GO" id="GO:0005524">
    <property type="term" value="F:ATP binding"/>
    <property type="evidence" value="ECO:0007669"/>
    <property type="project" value="UniProtKB-UniRule"/>
</dbReference>
<dbReference type="GO" id="GO:0052381">
    <property type="term" value="F:tRNA dimethylallyltransferase activity"/>
    <property type="evidence" value="ECO:0007669"/>
    <property type="project" value="UniProtKB-UniRule"/>
</dbReference>
<dbReference type="GO" id="GO:0006400">
    <property type="term" value="P:tRNA modification"/>
    <property type="evidence" value="ECO:0007669"/>
    <property type="project" value="TreeGrafter"/>
</dbReference>
<dbReference type="Gene3D" id="1.10.20.140">
    <property type="match status" value="1"/>
</dbReference>
<dbReference type="Gene3D" id="3.40.50.300">
    <property type="entry name" value="P-loop containing nucleotide triphosphate hydrolases"/>
    <property type="match status" value="1"/>
</dbReference>
<dbReference type="HAMAP" id="MF_00185">
    <property type="entry name" value="IPP_trans"/>
    <property type="match status" value="1"/>
</dbReference>
<dbReference type="InterPro" id="IPR039657">
    <property type="entry name" value="Dimethylallyltransferase"/>
</dbReference>
<dbReference type="InterPro" id="IPR018022">
    <property type="entry name" value="IPT"/>
</dbReference>
<dbReference type="InterPro" id="IPR027417">
    <property type="entry name" value="P-loop_NTPase"/>
</dbReference>
<dbReference type="NCBIfam" id="TIGR00174">
    <property type="entry name" value="miaA"/>
    <property type="match status" value="1"/>
</dbReference>
<dbReference type="PANTHER" id="PTHR11088">
    <property type="entry name" value="TRNA DIMETHYLALLYLTRANSFERASE"/>
    <property type="match status" value="1"/>
</dbReference>
<dbReference type="PANTHER" id="PTHR11088:SF60">
    <property type="entry name" value="TRNA DIMETHYLALLYLTRANSFERASE"/>
    <property type="match status" value="1"/>
</dbReference>
<dbReference type="Pfam" id="PF01715">
    <property type="entry name" value="IPPT"/>
    <property type="match status" value="1"/>
</dbReference>
<dbReference type="SUPFAM" id="SSF52540">
    <property type="entry name" value="P-loop containing nucleoside triphosphate hydrolases"/>
    <property type="match status" value="1"/>
</dbReference>
<keyword id="KW-0067">ATP-binding</keyword>
<keyword id="KW-0460">Magnesium</keyword>
<keyword id="KW-0547">Nucleotide-binding</keyword>
<keyword id="KW-0808">Transferase</keyword>
<keyword id="KW-0819">tRNA processing</keyword>
<proteinExistence type="inferred from homology"/>
<comment type="function">
    <text evidence="1">Catalyzes the transfer of a dimethylallyl group onto the adenine at position 37 in tRNAs that read codons beginning with uridine, leading to the formation of N6-(dimethylallyl)adenosine (i(6)A).</text>
</comment>
<comment type="catalytic activity">
    <reaction evidence="1">
        <text>adenosine(37) in tRNA + dimethylallyl diphosphate = N(6)-dimethylallyladenosine(37) in tRNA + diphosphate</text>
        <dbReference type="Rhea" id="RHEA:26482"/>
        <dbReference type="Rhea" id="RHEA-COMP:10162"/>
        <dbReference type="Rhea" id="RHEA-COMP:10375"/>
        <dbReference type="ChEBI" id="CHEBI:33019"/>
        <dbReference type="ChEBI" id="CHEBI:57623"/>
        <dbReference type="ChEBI" id="CHEBI:74411"/>
        <dbReference type="ChEBI" id="CHEBI:74415"/>
        <dbReference type="EC" id="2.5.1.75"/>
    </reaction>
</comment>
<comment type="cofactor">
    <cofactor evidence="1">
        <name>Mg(2+)</name>
        <dbReference type="ChEBI" id="CHEBI:18420"/>
    </cofactor>
</comment>
<comment type="subunit">
    <text evidence="1">Monomer.</text>
</comment>
<comment type="similarity">
    <text evidence="1">Belongs to the IPP transferase family.</text>
</comment>
<protein>
    <recommendedName>
        <fullName evidence="1">tRNA dimethylallyltransferase</fullName>
        <ecNumber evidence="1">2.5.1.75</ecNumber>
    </recommendedName>
    <alternativeName>
        <fullName evidence="1">Dimethylallyl diphosphate:tRNA dimethylallyltransferase</fullName>
        <shortName evidence="1">DMAPP:tRNA dimethylallyltransferase</shortName>
        <shortName evidence="1">DMATase</shortName>
    </alternativeName>
    <alternativeName>
        <fullName evidence="1">Isopentenyl-diphosphate:tRNA isopentenyltransferase</fullName>
        <shortName evidence="1">IPP transferase</shortName>
        <shortName evidence="1">IPPT</shortName>
        <shortName evidence="1">IPTase</shortName>
    </alternativeName>
</protein>
<accession>A1VXP9</accession>
<feature type="chain" id="PRO_0000377106" description="tRNA dimethylallyltransferase">
    <location>
        <begin position="1"/>
        <end position="289"/>
    </location>
</feature>
<feature type="region of interest" description="Interaction with substrate tRNA" evidence="1">
    <location>
        <begin position="34"/>
        <end position="37"/>
    </location>
</feature>
<feature type="binding site" evidence="1">
    <location>
        <begin position="9"/>
        <end position="16"/>
    </location>
    <ligand>
        <name>ATP</name>
        <dbReference type="ChEBI" id="CHEBI:30616"/>
    </ligand>
</feature>
<feature type="binding site" evidence="1">
    <location>
        <begin position="11"/>
        <end position="16"/>
    </location>
    <ligand>
        <name>substrate</name>
    </ligand>
</feature>
<feature type="site" description="Interaction with substrate tRNA" evidence="1">
    <location>
        <position position="100"/>
    </location>
</feature>
<reference key="1">
    <citation type="submission" date="2006-12" db="EMBL/GenBank/DDBJ databases">
        <authorList>
            <person name="Fouts D.E."/>
            <person name="Nelson K.E."/>
            <person name="Sebastian Y."/>
        </authorList>
    </citation>
    <scope>NUCLEOTIDE SEQUENCE [LARGE SCALE GENOMIC DNA]</scope>
    <source>
        <strain>81-176</strain>
    </source>
</reference>
<organism>
    <name type="scientific">Campylobacter jejuni subsp. jejuni serotype O:23/36 (strain 81-176)</name>
    <dbReference type="NCBI Taxonomy" id="354242"/>
    <lineage>
        <taxon>Bacteria</taxon>
        <taxon>Pseudomonadati</taxon>
        <taxon>Campylobacterota</taxon>
        <taxon>Epsilonproteobacteria</taxon>
        <taxon>Campylobacterales</taxon>
        <taxon>Campylobacteraceae</taxon>
        <taxon>Campylobacter</taxon>
    </lineage>
</organism>
<gene>
    <name evidence="1" type="primary">miaA</name>
    <name type="ordered locus">CJJ81176_0201</name>
</gene>